<accession>P0AG88</accession>
<accession>P15040</accession>
<organism>
    <name type="scientific">Escherichia coli O157:H7</name>
    <dbReference type="NCBI Taxonomy" id="83334"/>
    <lineage>
        <taxon>Bacteria</taxon>
        <taxon>Pseudomonadati</taxon>
        <taxon>Pseudomonadota</taxon>
        <taxon>Gammaproteobacteria</taxon>
        <taxon>Enterobacterales</taxon>
        <taxon>Enterobacteriaceae</taxon>
        <taxon>Escherichia</taxon>
    </lineage>
</organism>
<name>SECB_ECO57</name>
<gene>
    <name evidence="1" type="primary">secB</name>
    <name type="ordered locus">Z5036</name>
    <name type="ordered locus">ECs4487</name>
</gene>
<proteinExistence type="inferred from homology"/>
<sequence>MSEQNNTEMTFQIQRIYTKDISFEAPNAPHVFQKDWQPEVKLDLDTASSQLADDVYEVVLRVTVTASLGEETAFLCEVQQGGIFSIAGIEGTQMAHCLGAYCPNILFPYARECITSMVSRGTFPQLNLAPVNFDALFMNYLQQQAGEGTEEHQDA</sequence>
<evidence type="ECO:0000255" key="1">
    <source>
        <dbReference type="HAMAP-Rule" id="MF_00821"/>
    </source>
</evidence>
<protein>
    <recommendedName>
        <fullName evidence="1">Protein-export protein SecB</fullName>
    </recommendedName>
</protein>
<dbReference type="EMBL" id="AE005174">
    <property type="protein sequence ID" value="AAG58756.1"/>
    <property type="molecule type" value="Genomic_DNA"/>
</dbReference>
<dbReference type="EMBL" id="BA000007">
    <property type="protein sequence ID" value="BAB37910.1"/>
    <property type="molecule type" value="Genomic_DNA"/>
</dbReference>
<dbReference type="PIR" id="G91189">
    <property type="entry name" value="G91189"/>
</dbReference>
<dbReference type="PIR" id="H86036">
    <property type="entry name" value="H86036"/>
</dbReference>
<dbReference type="RefSeq" id="NP_312514.1">
    <property type="nucleotide sequence ID" value="NC_002695.1"/>
</dbReference>
<dbReference type="RefSeq" id="WP_000003377.1">
    <property type="nucleotide sequence ID" value="NZ_VOAI01000021.1"/>
</dbReference>
<dbReference type="SMR" id="P0AG88"/>
<dbReference type="STRING" id="155864.Z5036"/>
<dbReference type="GeneID" id="86944403"/>
<dbReference type="GeneID" id="915570"/>
<dbReference type="KEGG" id="ece:Z5036"/>
<dbReference type="KEGG" id="ecs:ECs_4487"/>
<dbReference type="PATRIC" id="fig|386585.9.peg.4702"/>
<dbReference type="eggNOG" id="COG1952">
    <property type="taxonomic scope" value="Bacteria"/>
</dbReference>
<dbReference type="HOGENOM" id="CLU_111574_1_0_6"/>
<dbReference type="OMA" id="CPNVLFP"/>
<dbReference type="Proteomes" id="UP000000558">
    <property type="component" value="Chromosome"/>
</dbReference>
<dbReference type="Proteomes" id="UP000002519">
    <property type="component" value="Chromosome"/>
</dbReference>
<dbReference type="GO" id="GO:0005737">
    <property type="term" value="C:cytoplasm"/>
    <property type="evidence" value="ECO:0007669"/>
    <property type="project" value="UniProtKB-SubCell"/>
</dbReference>
<dbReference type="GO" id="GO:0051082">
    <property type="term" value="F:unfolded protein binding"/>
    <property type="evidence" value="ECO:0007669"/>
    <property type="project" value="InterPro"/>
</dbReference>
<dbReference type="GO" id="GO:0006457">
    <property type="term" value="P:protein folding"/>
    <property type="evidence" value="ECO:0007669"/>
    <property type="project" value="UniProtKB-UniRule"/>
</dbReference>
<dbReference type="GO" id="GO:0051262">
    <property type="term" value="P:protein tetramerization"/>
    <property type="evidence" value="ECO:0007669"/>
    <property type="project" value="InterPro"/>
</dbReference>
<dbReference type="GO" id="GO:0015031">
    <property type="term" value="P:protein transport"/>
    <property type="evidence" value="ECO:0007669"/>
    <property type="project" value="UniProtKB-UniRule"/>
</dbReference>
<dbReference type="CDD" id="cd00557">
    <property type="entry name" value="Translocase_SecB"/>
    <property type="match status" value="1"/>
</dbReference>
<dbReference type="FunFam" id="3.10.420.10:FF:000001">
    <property type="entry name" value="Protein-export chaperone SecB"/>
    <property type="match status" value="1"/>
</dbReference>
<dbReference type="Gene3D" id="3.10.420.10">
    <property type="entry name" value="SecB-like"/>
    <property type="match status" value="1"/>
</dbReference>
<dbReference type="HAMAP" id="MF_00821">
    <property type="entry name" value="SecB"/>
    <property type="match status" value="1"/>
</dbReference>
<dbReference type="InterPro" id="IPR003708">
    <property type="entry name" value="SecB"/>
</dbReference>
<dbReference type="InterPro" id="IPR035958">
    <property type="entry name" value="SecB-like_sf"/>
</dbReference>
<dbReference type="NCBIfam" id="NF004390">
    <property type="entry name" value="PRK05751.1-1"/>
    <property type="match status" value="1"/>
</dbReference>
<dbReference type="NCBIfam" id="NF004393">
    <property type="entry name" value="PRK05751.1-4"/>
    <property type="match status" value="1"/>
</dbReference>
<dbReference type="NCBIfam" id="TIGR00809">
    <property type="entry name" value="secB"/>
    <property type="match status" value="1"/>
</dbReference>
<dbReference type="PANTHER" id="PTHR36918">
    <property type="match status" value="1"/>
</dbReference>
<dbReference type="PANTHER" id="PTHR36918:SF1">
    <property type="entry name" value="PROTEIN-EXPORT PROTEIN SECB"/>
    <property type="match status" value="1"/>
</dbReference>
<dbReference type="Pfam" id="PF02556">
    <property type="entry name" value="SecB"/>
    <property type="match status" value="1"/>
</dbReference>
<dbReference type="PRINTS" id="PR01594">
    <property type="entry name" value="SECBCHAPRONE"/>
</dbReference>
<dbReference type="SUPFAM" id="SSF54611">
    <property type="entry name" value="SecB-like"/>
    <property type="match status" value="1"/>
</dbReference>
<reference key="1">
    <citation type="journal article" date="2001" name="Nature">
        <title>Genome sequence of enterohaemorrhagic Escherichia coli O157:H7.</title>
        <authorList>
            <person name="Perna N.T."/>
            <person name="Plunkett G. III"/>
            <person name="Burland V."/>
            <person name="Mau B."/>
            <person name="Glasner J.D."/>
            <person name="Rose D.J."/>
            <person name="Mayhew G.F."/>
            <person name="Evans P.S."/>
            <person name="Gregor J."/>
            <person name="Kirkpatrick H.A."/>
            <person name="Posfai G."/>
            <person name="Hackett J."/>
            <person name="Klink S."/>
            <person name="Boutin A."/>
            <person name="Shao Y."/>
            <person name="Miller L."/>
            <person name="Grotbeck E.J."/>
            <person name="Davis N.W."/>
            <person name="Lim A."/>
            <person name="Dimalanta E.T."/>
            <person name="Potamousis K."/>
            <person name="Apodaca J."/>
            <person name="Anantharaman T.S."/>
            <person name="Lin J."/>
            <person name="Yen G."/>
            <person name="Schwartz D.C."/>
            <person name="Welch R.A."/>
            <person name="Blattner F.R."/>
        </authorList>
    </citation>
    <scope>NUCLEOTIDE SEQUENCE [LARGE SCALE GENOMIC DNA]</scope>
    <source>
        <strain>O157:H7 / EDL933 / ATCC 700927 / EHEC</strain>
    </source>
</reference>
<reference key="2">
    <citation type="journal article" date="2001" name="DNA Res.">
        <title>Complete genome sequence of enterohemorrhagic Escherichia coli O157:H7 and genomic comparison with a laboratory strain K-12.</title>
        <authorList>
            <person name="Hayashi T."/>
            <person name="Makino K."/>
            <person name="Ohnishi M."/>
            <person name="Kurokawa K."/>
            <person name="Ishii K."/>
            <person name="Yokoyama K."/>
            <person name="Han C.-G."/>
            <person name="Ohtsubo E."/>
            <person name="Nakayama K."/>
            <person name="Murata T."/>
            <person name="Tanaka M."/>
            <person name="Tobe T."/>
            <person name="Iida T."/>
            <person name="Takami H."/>
            <person name="Honda T."/>
            <person name="Sasakawa C."/>
            <person name="Ogasawara N."/>
            <person name="Yasunaga T."/>
            <person name="Kuhara S."/>
            <person name="Shiba T."/>
            <person name="Hattori M."/>
            <person name="Shinagawa H."/>
        </authorList>
    </citation>
    <scope>NUCLEOTIDE SEQUENCE [LARGE SCALE GENOMIC DNA]</scope>
    <source>
        <strain>O157:H7 / Sakai / RIMD 0509952 / EHEC</strain>
    </source>
</reference>
<feature type="chain" id="PRO_0000055371" description="Protein-export protein SecB">
    <location>
        <begin position="1"/>
        <end position="155"/>
    </location>
</feature>
<keyword id="KW-0143">Chaperone</keyword>
<keyword id="KW-0963">Cytoplasm</keyword>
<keyword id="KW-0653">Protein transport</keyword>
<keyword id="KW-1185">Reference proteome</keyword>
<keyword id="KW-0811">Translocation</keyword>
<keyword id="KW-0813">Transport</keyword>
<comment type="function">
    <text evidence="1">One of the proteins required for the normal export of preproteins out of the cell cytoplasm. It is a molecular chaperone that binds to a subset of precursor proteins, maintaining them in a translocation-competent state. It also specifically binds to its receptor SecA.</text>
</comment>
<comment type="subunit">
    <text evidence="1">Homotetramer, a dimer of dimers. One homotetramer interacts with 1 SecA dimer.</text>
</comment>
<comment type="subcellular location">
    <subcellularLocation>
        <location evidence="1">Cytoplasm</location>
    </subcellularLocation>
</comment>
<comment type="similarity">
    <text evidence="1">Belongs to the SecB family.</text>
</comment>